<gene>
    <name evidence="1" type="primary">prfA</name>
    <name type="ordered locus">Fphi_1072</name>
</gene>
<dbReference type="EMBL" id="CP000937">
    <property type="protein sequence ID" value="ABZ87295.1"/>
    <property type="molecule type" value="Genomic_DNA"/>
</dbReference>
<dbReference type="SMR" id="B0TX37"/>
<dbReference type="KEGG" id="fph:Fphi_1072"/>
<dbReference type="eggNOG" id="COG0216">
    <property type="taxonomic scope" value="Bacteria"/>
</dbReference>
<dbReference type="HOGENOM" id="CLU_036856_0_1_6"/>
<dbReference type="GO" id="GO:0005737">
    <property type="term" value="C:cytoplasm"/>
    <property type="evidence" value="ECO:0007669"/>
    <property type="project" value="UniProtKB-SubCell"/>
</dbReference>
<dbReference type="GO" id="GO:0016149">
    <property type="term" value="F:translation release factor activity, codon specific"/>
    <property type="evidence" value="ECO:0007669"/>
    <property type="project" value="UniProtKB-UniRule"/>
</dbReference>
<dbReference type="FunFam" id="3.30.160.20:FF:000004">
    <property type="entry name" value="Peptide chain release factor 1"/>
    <property type="match status" value="1"/>
</dbReference>
<dbReference type="FunFam" id="3.30.70.1660:FF:000002">
    <property type="entry name" value="Peptide chain release factor 1"/>
    <property type="match status" value="1"/>
</dbReference>
<dbReference type="FunFam" id="3.30.70.1660:FF:000004">
    <property type="entry name" value="Peptide chain release factor 1"/>
    <property type="match status" value="1"/>
</dbReference>
<dbReference type="Gene3D" id="3.30.160.20">
    <property type="match status" value="1"/>
</dbReference>
<dbReference type="Gene3D" id="3.30.70.1660">
    <property type="match status" value="2"/>
</dbReference>
<dbReference type="Gene3D" id="6.10.140.1950">
    <property type="match status" value="1"/>
</dbReference>
<dbReference type="HAMAP" id="MF_00093">
    <property type="entry name" value="Rel_fac_1"/>
    <property type="match status" value="1"/>
</dbReference>
<dbReference type="InterPro" id="IPR005139">
    <property type="entry name" value="PCRF"/>
</dbReference>
<dbReference type="InterPro" id="IPR000352">
    <property type="entry name" value="Pep_chain_release_fac_I"/>
</dbReference>
<dbReference type="InterPro" id="IPR045853">
    <property type="entry name" value="Pep_chain_release_fac_I_sf"/>
</dbReference>
<dbReference type="InterPro" id="IPR050057">
    <property type="entry name" value="Prokaryotic/Mito_RF"/>
</dbReference>
<dbReference type="InterPro" id="IPR004373">
    <property type="entry name" value="RF-1"/>
</dbReference>
<dbReference type="NCBIfam" id="TIGR00019">
    <property type="entry name" value="prfA"/>
    <property type="match status" value="1"/>
</dbReference>
<dbReference type="NCBIfam" id="NF001859">
    <property type="entry name" value="PRK00591.1"/>
    <property type="match status" value="1"/>
</dbReference>
<dbReference type="PANTHER" id="PTHR43804">
    <property type="entry name" value="LD18447P"/>
    <property type="match status" value="1"/>
</dbReference>
<dbReference type="PANTHER" id="PTHR43804:SF7">
    <property type="entry name" value="LD18447P"/>
    <property type="match status" value="1"/>
</dbReference>
<dbReference type="Pfam" id="PF03462">
    <property type="entry name" value="PCRF"/>
    <property type="match status" value="1"/>
</dbReference>
<dbReference type="Pfam" id="PF00472">
    <property type="entry name" value="RF-1"/>
    <property type="match status" value="1"/>
</dbReference>
<dbReference type="SMART" id="SM00937">
    <property type="entry name" value="PCRF"/>
    <property type="match status" value="1"/>
</dbReference>
<dbReference type="SUPFAM" id="SSF75620">
    <property type="entry name" value="Release factor"/>
    <property type="match status" value="1"/>
</dbReference>
<dbReference type="PROSITE" id="PS00745">
    <property type="entry name" value="RF_PROK_I"/>
    <property type="match status" value="1"/>
</dbReference>
<reference key="1">
    <citation type="submission" date="2007-12" db="EMBL/GenBank/DDBJ databases">
        <title>Complete sequence of chromosome of Francisella philomiragia subsp. philomiragia ATCC 25017.</title>
        <authorList>
            <consortium name="US DOE Joint Genome Institute"/>
            <person name="Copeland A."/>
            <person name="Lucas S."/>
            <person name="Lapidus A."/>
            <person name="Barry K."/>
            <person name="Detter J.C."/>
            <person name="Glavina del Rio T."/>
            <person name="Hammon N."/>
            <person name="Israni S."/>
            <person name="Dalin E."/>
            <person name="Tice H."/>
            <person name="Pitluck S."/>
            <person name="Chain P."/>
            <person name="Malfatti S."/>
            <person name="Shin M."/>
            <person name="Vergez L."/>
            <person name="Schmutz J."/>
            <person name="Larimer F."/>
            <person name="Land M."/>
            <person name="Hauser L."/>
            <person name="Richardson P."/>
        </authorList>
    </citation>
    <scope>NUCLEOTIDE SEQUENCE [LARGE SCALE GENOMIC DNA]</scope>
    <source>
        <strain>ATCC 25017 / CCUG 19701 / FSC 153 / O#319-036</strain>
    </source>
</reference>
<proteinExistence type="inferred from homology"/>
<evidence type="ECO:0000255" key="1">
    <source>
        <dbReference type="HAMAP-Rule" id="MF_00093"/>
    </source>
</evidence>
<evidence type="ECO:0000256" key="2">
    <source>
        <dbReference type="SAM" id="MobiDB-lite"/>
    </source>
</evidence>
<sequence length="361" mass="40472">MKDSIKAKLQSLIERHEEVSALLGEANVISDQNKFRDLSKEYSHLEPIVMAFKEYTQALEDKEAAYEMLNEKDAELVEMAKEELKSANESIERLEDELQILLLPRDPNDDANIFLEIRAGTGGDEASIFSGDLFKMYSKYAEQRGWKIEVVSASEGEHGGYKEIISRIYGDGVYSQLKFESGAHRVQRVPATESQGRIHTSACTVAVMPEADEVEGIDINPADIKVDTFRASGAGGQHVNKTDSAIRITHIPTGVVVECQDQRSQHKNRAAAMSMLKSKLLQAEIDKQQKEQSDTRKNLVGSGDRSERIRTYNYPQGRVTDHRINLTLYKLDEVMEGSLDSIIQPLILEHQADLLATMSDE</sequence>
<accession>B0TX37</accession>
<feature type="chain" id="PRO_1000075497" description="Peptide chain release factor 1">
    <location>
        <begin position="1"/>
        <end position="361"/>
    </location>
</feature>
<feature type="region of interest" description="Disordered" evidence="2">
    <location>
        <begin position="287"/>
        <end position="307"/>
    </location>
</feature>
<feature type="compositionally biased region" description="Basic and acidic residues" evidence="2">
    <location>
        <begin position="287"/>
        <end position="297"/>
    </location>
</feature>
<feature type="modified residue" description="N5-methylglutamine" evidence="1">
    <location>
        <position position="237"/>
    </location>
</feature>
<name>RF1_FRAP2</name>
<protein>
    <recommendedName>
        <fullName evidence="1">Peptide chain release factor 1</fullName>
        <shortName evidence="1">RF-1</shortName>
    </recommendedName>
</protein>
<comment type="function">
    <text evidence="1">Peptide chain release factor 1 directs the termination of translation in response to the peptide chain termination codons UAG and UAA.</text>
</comment>
<comment type="subcellular location">
    <subcellularLocation>
        <location evidence="1">Cytoplasm</location>
    </subcellularLocation>
</comment>
<comment type="PTM">
    <text evidence="1">Methylated by PrmC. Methylation increases the termination efficiency of RF1.</text>
</comment>
<comment type="similarity">
    <text evidence="1">Belongs to the prokaryotic/mitochondrial release factor family.</text>
</comment>
<organism>
    <name type="scientific">Francisella philomiragia subsp. philomiragia (strain ATCC 25017 / CCUG 19701 / FSC 153 / O#319-036)</name>
    <dbReference type="NCBI Taxonomy" id="484022"/>
    <lineage>
        <taxon>Bacteria</taxon>
        <taxon>Pseudomonadati</taxon>
        <taxon>Pseudomonadota</taxon>
        <taxon>Gammaproteobacteria</taxon>
        <taxon>Thiotrichales</taxon>
        <taxon>Francisellaceae</taxon>
        <taxon>Francisella</taxon>
    </lineage>
</organism>
<keyword id="KW-0963">Cytoplasm</keyword>
<keyword id="KW-0488">Methylation</keyword>
<keyword id="KW-0648">Protein biosynthesis</keyword>